<protein>
    <recommendedName>
        <fullName>Involucrin</fullName>
    </recommendedName>
</protein>
<organism>
    <name type="scientific">Sus scrofa</name>
    <name type="common">Pig</name>
    <dbReference type="NCBI Taxonomy" id="9823"/>
    <lineage>
        <taxon>Eukaryota</taxon>
        <taxon>Metazoa</taxon>
        <taxon>Chordata</taxon>
        <taxon>Craniata</taxon>
        <taxon>Vertebrata</taxon>
        <taxon>Euteleostomi</taxon>
        <taxon>Mammalia</taxon>
        <taxon>Eutheria</taxon>
        <taxon>Laurasiatheria</taxon>
        <taxon>Artiodactyla</taxon>
        <taxon>Suina</taxon>
        <taxon>Suidae</taxon>
        <taxon>Sus</taxon>
    </lineage>
</organism>
<comment type="function">
    <text>Part of the insoluble cornified cell envelope (CE) of stratified squamous epithelia.</text>
</comment>
<comment type="subunit">
    <text evidence="1">Directly or indirectly cross-linked to cornifelin (CNFN).</text>
</comment>
<comment type="subcellular location">
    <subcellularLocation>
        <location>Cytoplasm</location>
    </subcellularLocation>
    <text>Constituent of the scaffolding of the cornified envelope.</text>
</comment>
<comment type="tissue specificity">
    <text>Keratinocytes of epidermis and other stratified squamous epithelia.</text>
</comment>
<comment type="PTM">
    <text>Substrate of transglutaminase. Specific glutamines or lysines are cross-linked to keratins, desmoplakin and to inter involucrin molecules.</text>
</comment>
<comment type="similarity">
    <text evidence="3">Belongs to the involucrin family.</text>
</comment>
<gene>
    <name type="primary">IVL</name>
</gene>
<sequence>MSQQYTLPVTLPPALSQEPLKPVSPPADTQQEQVKQATPLPAPCQKMLSELPVEVPLEDAEKHTTLVKGVPEQECEPQPQEPQQQELHVEQQQQQQESQVQELHVDQQQQQQESQEQELHVDQQQQQQESQEQELHVDQQQQQESQVQELHVGHHQQQQESQEQELHVDHHQQQQESQEQELHVDQQQQQQESQEQELHVDQQQQQQESQEQELHVDHHQQQQESQVQELHVDHQQQQQESQEQELHVDQHQQQQESQEQELHVDQQQQELQVQEVQQQQQQQQEQQEDHQKAEHLEQEEAQREQQLKGQLEQEKKGVYQHLDQELTKRDEHLEKKGEHCWSSRRSL</sequence>
<feature type="chain" id="PRO_0000159741" description="Involucrin">
    <location>
        <begin position="1"/>
        <end position="347"/>
    </location>
</feature>
<feature type="region of interest" description="Disordered" evidence="2">
    <location>
        <begin position="1"/>
        <end position="43"/>
    </location>
</feature>
<feature type="region of interest" description="Disordered" evidence="2">
    <location>
        <begin position="56"/>
        <end position="347"/>
    </location>
</feature>
<feature type="compositionally biased region" description="Polar residues" evidence="2">
    <location>
        <begin position="27"/>
        <end position="36"/>
    </location>
</feature>
<feature type="compositionally biased region" description="Low complexity" evidence="2">
    <location>
        <begin position="70"/>
        <end position="114"/>
    </location>
</feature>
<feature type="compositionally biased region" description="Low complexity" evidence="2">
    <location>
        <begin position="138"/>
        <end position="161"/>
    </location>
</feature>
<feature type="compositionally biased region" description="Basic and acidic residues" evidence="2">
    <location>
        <begin position="164"/>
        <end position="173"/>
    </location>
</feature>
<feature type="compositionally biased region" description="Basic and acidic residues" evidence="2">
    <location>
        <begin position="212"/>
        <end position="221"/>
    </location>
</feature>
<feature type="compositionally biased region" description="Low complexity" evidence="2">
    <location>
        <begin position="222"/>
        <end position="241"/>
    </location>
</feature>
<feature type="compositionally biased region" description="Low complexity" evidence="2">
    <location>
        <begin position="265"/>
        <end position="285"/>
    </location>
</feature>
<feature type="compositionally biased region" description="Basic and acidic residues" evidence="2">
    <location>
        <begin position="287"/>
        <end position="341"/>
    </location>
</feature>
<name>INVO_PIG</name>
<dbReference type="EMBL" id="M34441">
    <property type="protein sequence ID" value="AAA31058.1"/>
    <property type="molecule type" value="Genomic_DNA"/>
</dbReference>
<dbReference type="PIR" id="I46592">
    <property type="entry name" value="I46592"/>
</dbReference>
<dbReference type="RefSeq" id="NP_999613.1">
    <property type="nucleotide sequence ID" value="NM_214448.1"/>
</dbReference>
<dbReference type="STRING" id="9823.ENSSSCP00000007032"/>
<dbReference type="PaxDb" id="9823-ENSSSCP00000007032"/>
<dbReference type="GeneID" id="407242"/>
<dbReference type="KEGG" id="ssc:407242"/>
<dbReference type="CTD" id="3713"/>
<dbReference type="eggNOG" id="ENOG502S84Y">
    <property type="taxonomic scope" value="Eukaryota"/>
</dbReference>
<dbReference type="InParanoid" id="P18175"/>
<dbReference type="OrthoDB" id="9635080at2759"/>
<dbReference type="Proteomes" id="UP000008227">
    <property type="component" value="Unplaced"/>
</dbReference>
<dbReference type="Proteomes" id="UP000314985">
    <property type="component" value="Unplaced"/>
</dbReference>
<dbReference type="Proteomes" id="UP000694570">
    <property type="component" value="Unplaced"/>
</dbReference>
<dbReference type="Proteomes" id="UP000694571">
    <property type="component" value="Unplaced"/>
</dbReference>
<dbReference type="Proteomes" id="UP000694720">
    <property type="component" value="Unplaced"/>
</dbReference>
<dbReference type="Proteomes" id="UP000694722">
    <property type="component" value="Unplaced"/>
</dbReference>
<dbReference type="Proteomes" id="UP000694723">
    <property type="component" value="Unplaced"/>
</dbReference>
<dbReference type="Proteomes" id="UP000694724">
    <property type="component" value="Unplaced"/>
</dbReference>
<dbReference type="Proteomes" id="UP000694725">
    <property type="component" value="Unplaced"/>
</dbReference>
<dbReference type="Proteomes" id="UP000694726">
    <property type="component" value="Unplaced"/>
</dbReference>
<dbReference type="Proteomes" id="UP000694727">
    <property type="component" value="Unplaced"/>
</dbReference>
<dbReference type="Proteomes" id="UP000694728">
    <property type="component" value="Unplaced"/>
</dbReference>
<dbReference type="GO" id="GO:0001533">
    <property type="term" value="C:cornified envelope"/>
    <property type="evidence" value="ECO:0007669"/>
    <property type="project" value="InterPro"/>
</dbReference>
<dbReference type="GO" id="GO:0005737">
    <property type="term" value="C:cytoplasm"/>
    <property type="evidence" value="ECO:0007669"/>
    <property type="project" value="UniProtKB-SubCell"/>
</dbReference>
<dbReference type="GO" id="GO:0031424">
    <property type="term" value="P:keratinization"/>
    <property type="evidence" value="ECO:0007669"/>
    <property type="project" value="UniProtKB-KW"/>
</dbReference>
<dbReference type="InterPro" id="IPR053371">
    <property type="entry name" value="Involucrin-like"/>
</dbReference>
<dbReference type="InterPro" id="IPR009733">
    <property type="entry name" value="Involucrin2"/>
</dbReference>
<dbReference type="InterPro" id="IPR019743">
    <property type="entry name" value="Involucrin_CS"/>
</dbReference>
<dbReference type="InterPro" id="IPR019571">
    <property type="entry name" value="Involucrin_N"/>
</dbReference>
<dbReference type="PANTHER" id="PTHR35172:SF1">
    <property type="entry name" value="INVOLUCRIN"/>
    <property type="match status" value="1"/>
</dbReference>
<dbReference type="PANTHER" id="PTHR35172">
    <property type="entry name" value="PROTEIN, PUTATIVE-RELATED"/>
    <property type="match status" value="1"/>
</dbReference>
<dbReference type="Pfam" id="PF06994">
    <property type="entry name" value="Involucrin2"/>
    <property type="match status" value="6"/>
</dbReference>
<dbReference type="Pfam" id="PF10583">
    <property type="entry name" value="Involucrin_N"/>
    <property type="match status" value="1"/>
</dbReference>
<dbReference type="PROSITE" id="PS00795">
    <property type="entry name" value="INVOLUCRIN"/>
    <property type="match status" value="1"/>
</dbReference>
<keyword id="KW-0963">Cytoplasm</keyword>
<keyword id="KW-0417">Keratinization</keyword>
<keyword id="KW-1185">Reference proteome</keyword>
<keyword id="KW-0677">Repeat</keyword>
<proteinExistence type="evidence at transcript level"/>
<evidence type="ECO:0000250" key="1"/>
<evidence type="ECO:0000256" key="2">
    <source>
        <dbReference type="SAM" id="MobiDB-lite"/>
    </source>
</evidence>
<evidence type="ECO:0000305" key="3"/>
<reference key="1">
    <citation type="journal article" date="1990" name="Mol. Biol. Evol.">
        <title>The involucrin genes of pig and dog: comparison of their segments of repeats with those of prosimians and higher primates.</title>
        <authorList>
            <person name="Tseng H."/>
            <person name="Green H."/>
        </authorList>
    </citation>
    <scope>NUCLEOTIDE SEQUENCE [GENOMIC DNA]</scope>
</reference>
<accession>P18175</accession>